<evidence type="ECO:0000255" key="1">
    <source>
        <dbReference type="HAMAP-Rule" id="MF_01509"/>
    </source>
</evidence>
<accession>A7I8Y0</accession>
<feature type="chain" id="PRO_1000024486" description="Replication factor C small subunit">
    <location>
        <begin position="1"/>
        <end position="322"/>
    </location>
</feature>
<feature type="binding site" evidence="1">
    <location>
        <begin position="46"/>
        <end position="53"/>
    </location>
    <ligand>
        <name>ATP</name>
        <dbReference type="ChEBI" id="CHEBI:30616"/>
    </ligand>
</feature>
<comment type="function">
    <text evidence="1">Part of the RFC clamp loader complex which loads the PCNA sliding clamp onto DNA.</text>
</comment>
<comment type="subunit">
    <text evidence="1">Heteromultimer composed of small subunits (RfcS) and large subunits (RfcL).</text>
</comment>
<comment type="similarity">
    <text evidence="1">Belongs to the activator 1 small subunits family. RfcS subfamily.</text>
</comment>
<keyword id="KW-0067">ATP-binding</keyword>
<keyword id="KW-0235">DNA replication</keyword>
<keyword id="KW-0547">Nucleotide-binding</keyword>
<keyword id="KW-1185">Reference proteome</keyword>
<reference key="1">
    <citation type="journal article" date="2015" name="Microbiology">
        <title>Genome of Methanoregula boonei 6A8 reveals adaptations to oligotrophic peatland environments.</title>
        <authorList>
            <person name="Braeuer S."/>
            <person name="Cadillo-Quiroz H."/>
            <person name="Kyrpides N."/>
            <person name="Woyke T."/>
            <person name="Goodwin L."/>
            <person name="Detter C."/>
            <person name="Podell S."/>
            <person name="Yavitt J.B."/>
            <person name="Zinder S.H."/>
        </authorList>
    </citation>
    <scope>NUCLEOTIDE SEQUENCE [LARGE SCALE GENOMIC DNA]</scope>
    <source>
        <strain>DSM 21154 / JCM 14090 / 6A8</strain>
    </source>
</reference>
<proteinExistence type="inferred from homology"/>
<protein>
    <recommendedName>
        <fullName evidence="1">Replication factor C small subunit</fullName>
        <shortName evidence="1">RFC small subunit</shortName>
    </recommendedName>
    <alternativeName>
        <fullName evidence="1">Clamp loader small subunit</fullName>
    </alternativeName>
</protein>
<sequence length="322" mass="35771">MDESHTIWIEKYRPAKLADIVGQDDIVERLSSYVKSGNLPHLLFTGSAGVGKTTAAVTLAREFFGDSWQMNFRELNASDERGIDVVRNQIKEFARTRPAGDAAFKILFLDEADALTTDAQAALRRTMESYAKTCRFILSCNYSSKIIDPIQSRCAIYRFRPLGPQAVKEEITRIAAREHLDVTPEAMDAMVYIAQGDMRKAINALQGAAILSATIEAPMVYAITSNARPEEIGELLTLSLSGDFDGAEALLTRLLRERGIAPNELINQCYRALTKRDMDRVLKVELIDALGETDFRLSEGASSDIQMEALIARFVLAGTRKR</sequence>
<dbReference type="EMBL" id="CP000780">
    <property type="protein sequence ID" value="ABS56191.1"/>
    <property type="molecule type" value="Genomic_DNA"/>
</dbReference>
<dbReference type="RefSeq" id="WP_012107237.1">
    <property type="nucleotide sequence ID" value="NC_009712.1"/>
</dbReference>
<dbReference type="SMR" id="A7I8Y0"/>
<dbReference type="STRING" id="456442.Mboo_1674"/>
<dbReference type="GeneID" id="5411997"/>
<dbReference type="KEGG" id="mbn:Mboo_1674"/>
<dbReference type="eggNOG" id="arCOG00469">
    <property type="taxonomic scope" value="Archaea"/>
</dbReference>
<dbReference type="HOGENOM" id="CLU_042324_2_1_2"/>
<dbReference type="OrthoDB" id="7928at2157"/>
<dbReference type="Proteomes" id="UP000002408">
    <property type="component" value="Chromosome"/>
</dbReference>
<dbReference type="GO" id="GO:0005663">
    <property type="term" value="C:DNA replication factor C complex"/>
    <property type="evidence" value="ECO:0007669"/>
    <property type="project" value="InterPro"/>
</dbReference>
<dbReference type="GO" id="GO:0005524">
    <property type="term" value="F:ATP binding"/>
    <property type="evidence" value="ECO:0007669"/>
    <property type="project" value="UniProtKB-UniRule"/>
</dbReference>
<dbReference type="GO" id="GO:0016887">
    <property type="term" value="F:ATP hydrolysis activity"/>
    <property type="evidence" value="ECO:0007669"/>
    <property type="project" value="InterPro"/>
</dbReference>
<dbReference type="GO" id="GO:0003677">
    <property type="term" value="F:DNA binding"/>
    <property type="evidence" value="ECO:0007669"/>
    <property type="project" value="InterPro"/>
</dbReference>
<dbReference type="GO" id="GO:0003689">
    <property type="term" value="F:DNA clamp loader activity"/>
    <property type="evidence" value="ECO:0007669"/>
    <property type="project" value="UniProtKB-UniRule"/>
</dbReference>
<dbReference type="GO" id="GO:0006281">
    <property type="term" value="P:DNA repair"/>
    <property type="evidence" value="ECO:0007669"/>
    <property type="project" value="TreeGrafter"/>
</dbReference>
<dbReference type="GO" id="GO:0006261">
    <property type="term" value="P:DNA-templated DNA replication"/>
    <property type="evidence" value="ECO:0007669"/>
    <property type="project" value="TreeGrafter"/>
</dbReference>
<dbReference type="CDD" id="cd00009">
    <property type="entry name" value="AAA"/>
    <property type="match status" value="1"/>
</dbReference>
<dbReference type="CDD" id="cd18140">
    <property type="entry name" value="HLD_clamp_RFC"/>
    <property type="match status" value="1"/>
</dbReference>
<dbReference type="FunFam" id="3.40.50.300:FF:000952">
    <property type="entry name" value="Replication factor C subunit 2"/>
    <property type="match status" value="1"/>
</dbReference>
<dbReference type="Gene3D" id="1.10.8.60">
    <property type="match status" value="1"/>
</dbReference>
<dbReference type="Gene3D" id="1.20.272.10">
    <property type="match status" value="1"/>
</dbReference>
<dbReference type="Gene3D" id="3.40.50.300">
    <property type="entry name" value="P-loop containing nucleotide triphosphate hydrolases"/>
    <property type="match status" value="1"/>
</dbReference>
<dbReference type="HAMAP" id="MF_01509">
    <property type="entry name" value="RfcS"/>
    <property type="match status" value="1"/>
</dbReference>
<dbReference type="InterPro" id="IPR003593">
    <property type="entry name" value="AAA+_ATPase"/>
</dbReference>
<dbReference type="InterPro" id="IPR003959">
    <property type="entry name" value="ATPase_AAA_core"/>
</dbReference>
<dbReference type="InterPro" id="IPR008921">
    <property type="entry name" value="DNA_pol3_clamp-load_cplx_C"/>
</dbReference>
<dbReference type="InterPro" id="IPR050238">
    <property type="entry name" value="DNA_Rep/Repair_Clamp_Loader"/>
</dbReference>
<dbReference type="InterPro" id="IPR027417">
    <property type="entry name" value="P-loop_NTPase"/>
</dbReference>
<dbReference type="InterPro" id="IPR023748">
    <property type="entry name" value="Rep_factor-C_ssu_arc"/>
</dbReference>
<dbReference type="InterPro" id="IPR013748">
    <property type="entry name" value="Rep_factorC_C"/>
</dbReference>
<dbReference type="InterPro" id="IPR047854">
    <property type="entry name" value="RFC_lid"/>
</dbReference>
<dbReference type="NCBIfam" id="NF001679">
    <property type="entry name" value="PRK00440.1"/>
    <property type="match status" value="1"/>
</dbReference>
<dbReference type="PANTHER" id="PTHR11669">
    <property type="entry name" value="REPLICATION FACTOR C / DNA POLYMERASE III GAMMA-TAU SUBUNIT"/>
    <property type="match status" value="1"/>
</dbReference>
<dbReference type="PANTHER" id="PTHR11669:SF20">
    <property type="entry name" value="REPLICATION FACTOR C SUBUNIT 4"/>
    <property type="match status" value="1"/>
</dbReference>
<dbReference type="Pfam" id="PF00004">
    <property type="entry name" value="AAA"/>
    <property type="match status" value="1"/>
</dbReference>
<dbReference type="Pfam" id="PF25361">
    <property type="entry name" value="AAA_lid_RFC1"/>
    <property type="match status" value="1"/>
</dbReference>
<dbReference type="Pfam" id="PF08542">
    <property type="entry name" value="Rep_fac_C"/>
    <property type="match status" value="1"/>
</dbReference>
<dbReference type="SMART" id="SM00382">
    <property type="entry name" value="AAA"/>
    <property type="match status" value="1"/>
</dbReference>
<dbReference type="SUPFAM" id="SSF52540">
    <property type="entry name" value="P-loop containing nucleoside triphosphate hydrolases"/>
    <property type="match status" value="1"/>
</dbReference>
<dbReference type="SUPFAM" id="SSF48019">
    <property type="entry name" value="post-AAA+ oligomerization domain-like"/>
    <property type="match status" value="1"/>
</dbReference>
<organism>
    <name type="scientific">Methanoregula boonei (strain DSM 21154 / JCM 14090 / 6A8)</name>
    <dbReference type="NCBI Taxonomy" id="456442"/>
    <lineage>
        <taxon>Archaea</taxon>
        <taxon>Methanobacteriati</taxon>
        <taxon>Methanobacteriota</taxon>
        <taxon>Stenosarchaea group</taxon>
        <taxon>Methanomicrobia</taxon>
        <taxon>Methanomicrobiales</taxon>
        <taxon>Methanoregulaceae</taxon>
        <taxon>Methanoregula</taxon>
    </lineage>
</organism>
<gene>
    <name evidence="1" type="primary">rfcS</name>
    <name type="ordered locus">Mboo_1674</name>
</gene>
<name>RFCS_METB6</name>